<sequence length="106" mass="11314">MQFTIAVALLCCAIASTLAYPMPDDMTMKPTPPPQYPLNLQGGGGGQSGDGFGFAVQGHQKVWTSDNGRHEIGLNGGYGQHLGGPYGNSEPSWKVGSTYTYRFPNF</sequence>
<comment type="function">
    <text evidence="1 3">Antimicrobial peptide required to resist Gram-negative bacterial infections, regulated by Dredd.</text>
</comment>
<comment type="subcellular location">
    <subcellularLocation>
        <location>Secreted</location>
    </subcellularLocation>
</comment>
<comment type="developmental stage">
    <text evidence="2">Constitutive expression of diptericin occurs in early pupae and in adults.</text>
</comment>
<comment type="induction">
    <text evidence="3 4">By bacterial infection (PubMed:2125051). Induced in fat body cells by sorbitol and galactitol, but not by mannitol, probably by activation of the imd/Relish signaling pathway; sugar alcohols are produced in the hemolymph by hemocyte-expressed aldo-keto reductase 1B (Ar1) in response to oral infection with Gram-negative bacteria to trigger a systemic response (PubMed:31350199).</text>
</comment>
<comment type="similarity">
    <text evidence="7">Belongs to the attacin/sarcotoxin-2 family.</text>
</comment>
<name>DIPA_DROME</name>
<keyword id="KW-0044">Antibiotic</keyword>
<keyword id="KW-0929">Antimicrobial</keyword>
<keyword id="KW-0391">Immunity</keyword>
<keyword id="KW-0399">Innate immunity</keyword>
<keyword id="KW-1185">Reference proteome</keyword>
<keyword id="KW-0964">Secreted</keyword>
<keyword id="KW-0732">Signal</keyword>
<protein>
    <recommendedName>
        <fullName evidence="8">Diptericin A</fullName>
    </recommendedName>
</protein>
<dbReference type="EMBL" id="M55432">
    <property type="protein sequence ID" value="AAA28466.1"/>
    <property type="molecule type" value="mRNA"/>
</dbReference>
<dbReference type="EMBL" id="Z11728">
    <property type="protein sequence ID" value="CAA77791.1"/>
    <property type="molecule type" value="Genomic_DNA"/>
</dbReference>
<dbReference type="EMBL" id="AF019020">
    <property type="protein sequence ID" value="AAB82517.1"/>
    <property type="molecule type" value="Genomic_DNA"/>
</dbReference>
<dbReference type="EMBL" id="AF019021">
    <property type="protein sequence ID" value="AAB82518.1"/>
    <property type="molecule type" value="Genomic_DNA"/>
</dbReference>
<dbReference type="EMBL" id="AF019022">
    <property type="protein sequence ID" value="AAB82519.1"/>
    <property type="molecule type" value="Genomic_DNA"/>
</dbReference>
<dbReference type="EMBL" id="AF019023">
    <property type="protein sequence ID" value="AAB82520.1"/>
    <property type="molecule type" value="Genomic_DNA"/>
</dbReference>
<dbReference type="EMBL" id="AF019024">
    <property type="protein sequence ID" value="AAB82521.1"/>
    <property type="molecule type" value="Genomic_DNA"/>
</dbReference>
<dbReference type="EMBL" id="AF019025">
    <property type="protein sequence ID" value="AAB82522.1"/>
    <property type="molecule type" value="Genomic_DNA"/>
</dbReference>
<dbReference type="EMBL" id="AF019026">
    <property type="protein sequence ID" value="AAB82523.1"/>
    <property type="molecule type" value="Genomic_DNA"/>
</dbReference>
<dbReference type="EMBL" id="AF019027">
    <property type="protein sequence ID" value="AAB82524.1"/>
    <property type="molecule type" value="Genomic_DNA"/>
</dbReference>
<dbReference type="EMBL" id="AF019028">
    <property type="protein sequence ID" value="AAB82525.1"/>
    <property type="molecule type" value="Genomic_DNA"/>
</dbReference>
<dbReference type="EMBL" id="AF019029">
    <property type="protein sequence ID" value="AAB82526.1"/>
    <property type="molecule type" value="Genomic_DNA"/>
</dbReference>
<dbReference type="EMBL" id="AF019030">
    <property type="protein sequence ID" value="AAB82527.1"/>
    <property type="molecule type" value="Genomic_DNA"/>
</dbReference>
<dbReference type="EMBL" id="AF019031">
    <property type="protein sequence ID" value="AAB82528.1"/>
    <property type="molecule type" value="Genomic_DNA"/>
</dbReference>
<dbReference type="EMBL" id="AF019032">
    <property type="protein sequence ID" value="AAB82529.1"/>
    <property type="molecule type" value="Genomic_DNA"/>
</dbReference>
<dbReference type="EMBL" id="AF019033">
    <property type="protein sequence ID" value="AAB82530.1"/>
    <property type="molecule type" value="Genomic_DNA"/>
</dbReference>
<dbReference type="EMBL" id="AF019034">
    <property type="protein sequence ID" value="AAB82531.1"/>
    <property type="molecule type" value="Genomic_DNA"/>
</dbReference>
<dbReference type="EMBL" id="AE013599">
    <property type="protein sequence ID" value="AAF57619.1"/>
    <property type="molecule type" value="Genomic_DNA"/>
</dbReference>
<dbReference type="EMBL" id="AY071667">
    <property type="protein sequence ID" value="AAL49289.1"/>
    <property type="molecule type" value="mRNA"/>
</dbReference>
<dbReference type="PIR" id="S20878">
    <property type="entry name" value="S20878"/>
</dbReference>
<dbReference type="RefSeq" id="NP_476808.1">
    <property type="nucleotide sequence ID" value="NM_057460.4"/>
</dbReference>
<dbReference type="BioGRID" id="62850">
    <property type="interactions" value="1"/>
</dbReference>
<dbReference type="DIP" id="DIP-20883N"/>
<dbReference type="FunCoup" id="P24492">
    <property type="interactions" value="81"/>
</dbReference>
<dbReference type="IntAct" id="P24492">
    <property type="interactions" value="2"/>
</dbReference>
<dbReference type="STRING" id="7227.FBpp0085802"/>
<dbReference type="TCDB" id="1.C.115.1.1">
    <property type="family name" value="the membrane-permeabilizing peptide, atticin (atticin) family"/>
</dbReference>
<dbReference type="PaxDb" id="7227-FBpp0085802"/>
<dbReference type="DNASU" id="37183"/>
<dbReference type="EnsemblMetazoa" id="FBtr0086620">
    <property type="protein sequence ID" value="FBpp0085802"/>
    <property type="gene ID" value="FBgn0004240"/>
</dbReference>
<dbReference type="GeneID" id="37183"/>
<dbReference type="KEGG" id="dme:Dmel_CG12763"/>
<dbReference type="AGR" id="FB:FBgn0004240"/>
<dbReference type="CTD" id="37183"/>
<dbReference type="FlyBase" id="FBgn0004240">
    <property type="gene designation" value="DptA"/>
</dbReference>
<dbReference type="VEuPathDB" id="VectorBase:FBgn0004240"/>
<dbReference type="GeneTree" id="ENSGT00940000176590"/>
<dbReference type="HOGENOM" id="CLU_168494_0_0_1"/>
<dbReference type="InParanoid" id="P24492"/>
<dbReference type="OMA" id="QGHEKVW"/>
<dbReference type="PhylomeDB" id="P24492"/>
<dbReference type="BioGRID-ORCS" id="37183">
    <property type="hits" value="0 hits in 1 CRISPR screen"/>
</dbReference>
<dbReference type="GenomeRNAi" id="37183"/>
<dbReference type="PRO" id="PR:P24492"/>
<dbReference type="Proteomes" id="UP000000803">
    <property type="component" value="Chromosome 2R"/>
</dbReference>
<dbReference type="Bgee" id="FBgn0004240">
    <property type="expression patterns" value="Expressed in fat body cell in proboscis and 41 other cell types or tissues"/>
</dbReference>
<dbReference type="ExpressionAtlas" id="P24492">
    <property type="expression patterns" value="baseline and differential"/>
</dbReference>
<dbReference type="GO" id="GO:0005576">
    <property type="term" value="C:extracellular region"/>
    <property type="evidence" value="ECO:0007669"/>
    <property type="project" value="UniProtKB-SubCell"/>
</dbReference>
<dbReference type="GO" id="GO:0019731">
    <property type="term" value="P:antibacterial humoral response"/>
    <property type="evidence" value="ECO:0000270"/>
    <property type="project" value="FlyBase"/>
</dbReference>
<dbReference type="GO" id="GO:0042742">
    <property type="term" value="P:defense response to bacterium"/>
    <property type="evidence" value="ECO:0000250"/>
    <property type="project" value="FlyBase"/>
</dbReference>
<dbReference type="GO" id="GO:0050829">
    <property type="term" value="P:defense response to Gram-negative bacterium"/>
    <property type="evidence" value="ECO:0000314"/>
    <property type="project" value="FlyBase"/>
</dbReference>
<dbReference type="GO" id="GO:0045087">
    <property type="term" value="P:innate immune response"/>
    <property type="evidence" value="ECO:0007669"/>
    <property type="project" value="UniProtKB-KW"/>
</dbReference>
<dbReference type="GO" id="GO:0045089">
    <property type="term" value="P:positive regulation of innate immune response"/>
    <property type="evidence" value="ECO:0007001"/>
    <property type="project" value="FlyBase"/>
</dbReference>
<dbReference type="GO" id="GO:0009617">
    <property type="term" value="P:response to bacterium"/>
    <property type="evidence" value="ECO:0000314"/>
    <property type="project" value="FlyBase"/>
</dbReference>
<dbReference type="GO" id="GO:0055093">
    <property type="term" value="P:response to hyperoxia"/>
    <property type="evidence" value="ECO:0000315"/>
    <property type="project" value="FlyBase"/>
</dbReference>
<evidence type="ECO:0000269" key="1">
    <source>
    </source>
</evidence>
<evidence type="ECO:0000269" key="2">
    <source>
    </source>
</evidence>
<evidence type="ECO:0000269" key="3">
    <source>
    </source>
</evidence>
<evidence type="ECO:0000269" key="4">
    <source>
    </source>
</evidence>
<evidence type="ECO:0000303" key="5">
    <source>
    </source>
</evidence>
<evidence type="ECO:0000303" key="6">
    <source>
    </source>
</evidence>
<evidence type="ECO:0000305" key="7"/>
<evidence type="ECO:0000312" key="8">
    <source>
        <dbReference type="FlyBase" id="FBgn0004240"/>
    </source>
</evidence>
<feature type="signal peptide" evidence="7">
    <location>
        <begin position="1"/>
        <end position="19"/>
    </location>
</feature>
<feature type="propeptide" id="PRO_0000004908" description="Removed by a dipeptidylpeptidase" evidence="7">
    <location>
        <begin position="20"/>
        <end position="23"/>
    </location>
</feature>
<feature type="chain" id="PRO_0000004909" description="Diptericin A">
    <location>
        <begin position="24"/>
        <end position="106"/>
    </location>
</feature>
<feature type="sequence variant" description="In strain: B306, Z18, Z22 and Z24.">
    <original>S</original>
    <variation>R</variation>
    <location>
        <position position="48"/>
    </location>
</feature>
<feature type="sequence variant" description="In strain: B101.">
    <original>S</original>
    <variation>T</variation>
    <location>
        <position position="48"/>
    </location>
</feature>
<feature type="sequence variant" description="In strain: B306, Z18 and Z22.">
    <original>A</original>
    <variation>G</variation>
    <location>
        <position position="55"/>
    </location>
</feature>
<feature type="sequence variant" description="In strain: Z22.">
    <original>S</original>
    <variation>T</variation>
    <location>
        <position position="65"/>
    </location>
</feature>
<feature type="sequence variant" description="In strain: B141.">
    <original>G</original>
    <variation>R</variation>
    <location>
        <position position="73"/>
    </location>
</feature>
<feature type="sequence variant" description="In strain: Z24.">
    <original>E</original>
    <variation>Q</variation>
    <location>
        <position position="90"/>
    </location>
</feature>
<feature type="sequence variant" description="In strain: B101.">
    <original>T</original>
    <variation>N</variation>
    <location>
        <position position="98"/>
    </location>
</feature>
<accession>P24492</accession>
<accession>O16838</accession>
<accession>O16839</accession>
<accession>O16840</accession>
<accession>O16841</accession>
<accession>O18669</accession>
<accession>Q9V8P5</accession>
<proteinExistence type="evidence at transcript level"/>
<reference key="1">
    <citation type="journal article" date="1990" name="J. Biol. Chem.">
        <title>Insect immunity. Characterization of a Drosophila cDNA encoding a novel member of the diptericin family of immune peptides.</title>
        <authorList>
            <person name="Wicker C."/>
            <person name="Reichhart J.-M."/>
            <person name="Hoffmann D."/>
            <person name="Hultmark D."/>
            <person name="Samakovlis C."/>
            <person name="Hoffmann J.A."/>
        </authorList>
    </citation>
    <scope>NUCLEOTIDE SEQUENCE [MRNA]</scope>
    <scope>FUNCTION</scope>
    <scope>INDUCTION</scope>
    <source>
        <strain>Canton-S</strain>
    </source>
</reference>
<reference key="2">
    <citation type="journal article" date="1992" name="EMBO J.">
        <title>Insect immunity: developmental and inducible activity of the Drosophila diptericin promoter.</title>
        <authorList>
            <person name="Reichhart J.-M."/>
            <person name="Meister M."/>
            <person name="Dimarcq J.-L."/>
            <person name="Zachary D."/>
            <person name="Hoffmann D."/>
            <person name="Ruiz C."/>
            <person name="Richards G."/>
            <person name="Hoffmann J.A."/>
        </authorList>
    </citation>
    <scope>NUCLEOTIDE SEQUENCE [GENOMIC DNA]</scope>
    <scope>DEVELOPMENTAL STAGE</scope>
    <source>
        <strain>Oregon-R</strain>
    </source>
</reference>
<reference key="3">
    <citation type="journal article" date="1997" name="Genetics">
        <title>Molecular population genetics of Drosophila immune system genes.</title>
        <authorList>
            <person name="Clark A.G."/>
            <person name="Wang L."/>
        </authorList>
    </citation>
    <scope>NUCLEOTIDE SEQUENCE [GENOMIC DNA]</scope>
    <source>
        <strain>B09</strain>
        <strain>B101</strain>
        <strain>B115</strain>
        <strain>B137</strain>
        <strain>B141</strain>
        <strain>B202</strain>
        <strain>B208</strain>
        <strain>B222</strain>
        <strain>B225</strain>
        <strain>B226</strain>
        <strain>B306</strain>
        <strain>B314</strain>
        <strain>Z18</strain>
        <strain>Z22</strain>
        <strain>Z24</strain>
    </source>
</reference>
<reference key="4">
    <citation type="journal article" date="2000" name="Science">
        <title>The genome sequence of Drosophila melanogaster.</title>
        <authorList>
            <person name="Adams M.D."/>
            <person name="Celniker S.E."/>
            <person name="Holt R.A."/>
            <person name="Evans C.A."/>
            <person name="Gocayne J.D."/>
            <person name="Amanatides P.G."/>
            <person name="Scherer S.E."/>
            <person name="Li P.W."/>
            <person name="Hoskins R.A."/>
            <person name="Galle R.F."/>
            <person name="George R.A."/>
            <person name="Lewis S.E."/>
            <person name="Richards S."/>
            <person name="Ashburner M."/>
            <person name="Henderson S.N."/>
            <person name="Sutton G.G."/>
            <person name="Wortman J.R."/>
            <person name="Yandell M.D."/>
            <person name="Zhang Q."/>
            <person name="Chen L.X."/>
            <person name="Brandon R.C."/>
            <person name="Rogers Y.-H.C."/>
            <person name="Blazej R.G."/>
            <person name="Champe M."/>
            <person name="Pfeiffer B.D."/>
            <person name="Wan K.H."/>
            <person name="Doyle C."/>
            <person name="Baxter E.G."/>
            <person name="Helt G."/>
            <person name="Nelson C.R."/>
            <person name="Miklos G.L.G."/>
            <person name="Abril J.F."/>
            <person name="Agbayani A."/>
            <person name="An H.-J."/>
            <person name="Andrews-Pfannkoch C."/>
            <person name="Baldwin D."/>
            <person name="Ballew R.M."/>
            <person name="Basu A."/>
            <person name="Baxendale J."/>
            <person name="Bayraktaroglu L."/>
            <person name="Beasley E.M."/>
            <person name="Beeson K.Y."/>
            <person name="Benos P.V."/>
            <person name="Berman B.P."/>
            <person name="Bhandari D."/>
            <person name="Bolshakov S."/>
            <person name="Borkova D."/>
            <person name="Botchan M.R."/>
            <person name="Bouck J."/>
            <person name="Brokstein P."/>
            <person name="Brottier P."/>
            <person name="Burtis K.C."/>
            <person name="Busam D.A."/>
            <person name="Butler H."/>
            <person name="Cadieu E."/>
            <person name="Center A."/>
            <person name="Chandra I."/>
            <person name="Cherry J.M."/>
            <person name="Cawley S."/>
            <person name="Dahlke C."/>
            <person name="Davenport L.B."/>
            <person name="Davies P."/>
            <person name="de Pablos B."/>
            <person name="Delcher A."/>
            <person name="Deng Z."/>
            <person name="Mays A.D."/>
            <person name="Dew I."/>
            <person name="Dietz S.M."/>
            <person name="Dodson K."/>
            <person name="Doup L.E."/>
            <person name="Downes M."/>
            <person name="Dugan-Rocha S."/>
            <person name="Dunkov B.C."/>
            <person name="Dunn P."/>
            <person name="Durbin K.J."/>
            <person name="Evangelista C.C."/>
            <person name="Ferraz C."/>
            <person name="Ferriera S."/>
            <person name="Fleischmann W."/>
            <person name="Fosler C."/>
            <person name="Gabrielian A.E."/>
            <person name="Garg N.S."/>
            <person name="Gelbart W.M."/>
            <person name="Glasser K."/>
            <person name="Glodek A."/>
            <person name="Gong F."/>
            <person name="Gorrell J.H."/>
            <person name="Gu Z."/>
            <person name="Guan P."/>
            <person name="Harris M."/>
            <person name="Harris N.L."/>
            <person name="Harvey D.A."/>
            <person name="Heiman T.J."/>
            <person name="Hernandez J.R."/>
            <person name="Houck J."/>
            <person name="Hostin D."/>
            <person name="Houston K.A."/>
            <person name="Howland T.J."/>
            <person name="Wei M.-H."/>
            <person name="Ibegwam C."/>
            <person name="Jalali M."/>
            <person name="Kalush F."/>
            <person name="Karpen G.H."/>
            <person name="Ke Z."/>
            <person name="Kennison J.A."/>
            <person name="Ketchum K.A."/>
            <person name="Kimmel B.E."/>
            <person name="Kodira C.D."/>
            <person name="Kraft C.L."/>
            <person name="Kravitz S."/>
            <person name="Kulp D."/>
            <person name="Lai Z."/>
            <person name="Lasko P."/>
            <person name="Lei Y."/>
            <person name="Levitsky A.A."/>
            <person name="Li J.H."/>
            <person name="Li Z."/>
            <person name="Liang Y."/>
            <person name="Lin X."/>
            <person name="Liu X."/>
            <person name="Mattei B."/>
            <person name="McIntosh T.C."/>
            <person name="McLeod M.P."/>
            <person name="McPherson D."/>
            <person name="Merkulov G."/>
            <person name="Milshina N.V."/>
            <person name="Mobarry C."/>
            <person name="Morris J."/>
            <person name="Moshrefi A."/>
            <person name="Mount S.M."/>
            <person name="Moy M."/>
            <person name="Murphy B."/>
            <person name="Murphy L."/>
            <person name="Muzny D.M."/>
            <person name="Nelson D.L."/>
            <person name="Nelson D.R."/>
            <person name="Nelson K.A."/>
            <person name="Nixon K."/>
            <person name="Nusskern D.R."/>
            <person name="Pacleb J.M."/>
            <person name="Palazzolo M."/>
            <person name="Pittman G.S."/>
            <person name="Pan S."/>
            <person name="Pollard J."/>
            <person name="Puri V."/>
            <person name="Reese M.G."/>
            <person name="Reinert K."/>
            <person name="Remington K."/>
            <person name="Saunders R.D.C."/>
            <person name="Scheeler F."/>
            <person name="Shen H."/>
            <person name="Shue B.C."/>
            <person name="Siden-Kiamos I."/>
            <person name="Simpson M."/>
            <person name="Skupski M.P."/>
            <person name="Smith T.J."/>
            <person name="Spier E."/>
            <person name="Spradling A.C."/>
            <person name="Stapleton M."/>
            <person name="Strong R."/>
            <person name="Sun E."/>
            <person name="Svirskas R."/>
            <person name="Tector C."/>
            <person name="Turner R."/>
            <person name="Venter E."/>
            <person name="Wang A.H."/>
            <person name="Wang X."/>
            <person name="Wang Z.-Y."/>
            <person name="Wassarman D.A."/>
            <person name="Weinstock G.M."/>
            <person name="Weissenbach J."/>
            <person name="Williams S.M."/>
            <person name="Woodage T."/>
            <person name="Worley K.C."/>
            <person name="Wu D."/>
            <person name="Yang S."/>
            <person name="Yao Q.A."/>
            <person name="Ye J."/>
            <person name="Yeh R.-F."/>
            <person name="Zaveri J.S."/>
            <person name="Zhan M."/>
            <person name="Zhang G."/>
            <person name="Zhao Q."/>
            <person name="Zheng L."/>
            <person name="Zheng X.H."/>
            <person name="Zhong F.N."/>
            <person name="Zhong W."/>
            <person name="Zhou X."/>
            <person name="Zhu S.C."/>
            <person name="Zhu X."/>
            <person name="Smith H.O."/>
            <person name="Gibbs R.A."/>
            <person name="Myers E.W."/>
            <person name="Rubin G.M."/>
            <person name="Venter J.C."/>
        </authorList>
    </citation>
    <scope>NUCLEOTIDE SEQUENCE [LARGE SCALE GENOMIC DNA]</scope>
    <source>
        <strain>Berkeley</strain>
    </source>
</reference>
<reference key="5">
    <citation type="journal article" date="2002" name="Genome Biol.">
        <title>Annotation of the Drosophila melanogaster euchromatic genome: a systematic review.</title>
        <authorList>
            <person name="Misra S."/>
            <person name="Crosby M.A."/>
            <person name="Mungall C.J."/>
            <person name="Matthews B.B."/>
            <person name="Campbell K.S."/>
            <person name="Hradecky P."/>
            <person name="Huang Y."/>
            <person name="Kaminker J.S."/>
            <person name="Millburn G.H."/>
            <person name="Prochnik S.E."/>
            <person name="Smith C.D."/>
            <person name="Tupy J.L."/>
            <person name="Whitfield E.J."/>
            <person name="Bayraktaroglu L."/>
            <person name="Berman B.P."/>
            <person name="Bettencourt B.R."/>
            <person name="Celniker S.E."/>
            <person name="de Grey A.D.N.J."/>
            <person name="Drysdale R.A."/>
            <person name="Harris N.L."/>
            <person name="Richter J."/>
            <person name="Russo S."/>
            <person name="Schroeder A.J."/>
            <person name="Shu S.Q."/>
            <person name="Stapleton M."/>
            <person name="Yamada C."/>
            <person name="Ashburner M."/>
            <person name="Gelbart W.M."/>
            <person name="Rubin G.M."/>
            <person name="Lewis S.E."/>
        </authorList>
    </citation>
    <scope>GENOME REANNOTATION</scope>
    <source>
        <strain>Berkeley</strain>
    </source>
</reference>
<reference key="6">
    <citation type="journal article" date="2002" name="Genome Biol.">
        <title>A Drosophila full-length cDNA resource.</title>
        <authorList>
            <person name="Stapleton M."/>
            <person name="Carlson J.W."/>
            <person name="Brokstein P."/>
            <person name="Yu C."/>
            <person name="Champe M."/>
            <person name="George R.A."/>
            <person name="Guarin H."/>
            <person name="Kronmiller B."/>
            <person name="Pacleb J.M."/>
            <person name="Park S."/>
            <person name="Wan K.H."/>
            <person name="Rubin G.M."/>
            <person name="Celniker S.E."/>
        </authorList>
    </citation>
    <scope>NUCLEOTIDE SEQUENCE [LARGE SCALE MRNA]</scope>
    <source>
        <strain>Berkeley</strain>
        <tissue>Head</tissue>
    </source>
</reference>
<reference key="7">
    <citation type="journal article" date="2000" name="EMBO Rep.">
        <title>The Drosophila caspase Dredd is required to resist Gram-negative bacterial infection.</title>
        <authorList>
            <person name="Leulier F."/>
            <person name="Rodriguez A."/>
            <person name="Khush R.S."/>
            <person name="Abrams J.M."/>
            <person name="Lemaitre B."/>
        </authorList>
    </citation>
    <scope>FUNCTION</scope>
</reference>
<reference key="8">
    <citation type="journal article" date="2019" name="Cell Host Microbe">
        <title>Sugar Alcohols of Polyol Pathway Serve as Alarmins to Mediate Local-Systemic Innate Immune Communication in Drosophila.</title>
        <authorList>
            <person name="Yang S."/>
            <person name="Zhao Y."/>
            <person name="Yu J."/>
            <person name="Fan Z."/>
            <person name="Gong S.T."/>
            <person name="Tang H."/>
            <person name="Pan L."/>
        </authorList>
    </citation>
    <scope>INDUCTION BY SORBITOL AND GALACTITOL</scope>
</reference>
<gene>
    <name evidence="8" type="primary">DptA</name>
    <name evidence="5" type="synonym">Dipt</name>
    <name evidence="6" type="synonym">Dpt</name>
    <name evidence="8" type="ORF">CG12763</name>
</gene>
<organism>
    <name type="scientific">Drosophila melanogaster</name>
    <name type="common">Fruit fly</name>
    <dbReference type="NCBI Taxonomy" id="7227"/>
    <lineage>
        <taxon>Eukaryota</taxon>
        <taxon>Metazoa</taxon>
        <taxon>Ecdysozoa</taxon>
        <taxon>Arthropoda</taxon>
        <taxon>Hexapoda</taxon>
        <taxon>Insecta</taxon>
        <taxon>Pterygota</taxon>
        <taxon>Neoptera</taxon>
        <taxon>Endopterygota</taxon>
        <taxon>Diptera</taxon>
        <taxon>Brachycera</taxon>
        <taxon>Muscomorpha</taxon>
        <taxon>Ephydroidea</taxon>
        <taxon>Drosophilidae</taxon>
        <taxon>Drosophila</taxon>
        <taxon>Sophophora</taxon>
    </lineage>
</organism>